<name>SPC29_YEASV</name>
<accession>E7M1C7</accession>
<evidence type="ECO:0000250" key="1"/>
<evidence type="ECO:0000250" key="2">
    <source>
        <dbReference type="UniProtKB" id="P33419"/>
    </source>
</evidence>
<evidence type="ECO:0000256" key="3">
    <source>
        <dbReference type="SAM" id="MobiDB-lite"/>
    </source>
</evidence>
<evidence type="ECO:0000305" key="4"/>
<protein>
    <recommendedName>
        <fullName>Spindle pole component 29</fullName>
    </recommendedName>
</protein>
<keyword id="KW-0963">Cytoplasm</keyword>
<keyword id="KW-0206">Cytoskeleton</keyword>
<keyword id="KW-0539">Nucleus</keyword>
<keyword id="KW-0597">Phosphoprotein</keyword>
<comment type="function">
    <text evidence="1">Component of the spindle pole body (SPB) required for the proper execution of spindle pole body (SPB) duplication. Links the central plaque component SPC42 to the inner plaque component SPC110 (By similarity).</text>
</comment>
<comment type="subunit">
    <text evidence="1">Component of the SPC110 complex containing at least CMD1, SPC29, SPC42 and SCP110. Interacts with BBP1.</text>
</comment>
<comment type="subcellular location">
    <subcellularLocation>
        <location evidence="1">Nucleus</location>
    </subcellularLocation>
    <subcellularLocation>
        <location evidence="1">Cytoplasm</location>
        <location evidence="1">Cytoskeleton</location>
        <location evidence="1">Microtubule organizing center</location>
        <location evidence="1">Spindle pole body</location>
    </subcellularLocation>
</comment>
<comment type="PTM">
    <text evidence="1">MPS1-mediated phosphorylation at Thr-240 is required for spindle pole body duplication.</text>
</comment>
<comment type="similarity">
    <text evidence="4">Belongs to the SPC29 family.</text>
</comment>
<feature type="chain" id="PRO_0000409196" description="Spindle pole component 29">
    <location>
        <begin position="1"/>
        <end position="253"/>
    </location>
</feature>
<feature type="region of interest" description="Disordered" evidence="3">
    <location>
        <begin position="1"/>
        <end position="20"/>
    </location>
</feature>
<feature type="region of interest" description="Disordered" evidence="3">
    <location>
        <begin position="31"/>
        <end position="123"/>
    </location>
</feature>
<feature type="region of interest" description="Disordered" evidence="3">
    <location>
        <begin position="210"/>
        <end position="231"/>
    </location>
</feature>
<feature type="compositionally biased region" description="Polar residues" evidence="3">
    <location>
        <begin position="1"/>
        <end position="12"/>
    </location>
</feature>
<feature type="compositionally biased region" description="Basic and acidic residues" evidence="3">
    <location>
        <begin position="69"/>
        <end position="91"/>
    </location>
</feature>
<feature type="compositionally biased region" description="Basic and acidic residues" evidence="3">
    <location>
        <begin position="211"/>
        <end position="231"/>
    </location>
</feature>
<feature type="modified residue" description="Phosphothreonine" evidence="2">
    <location>
        <position position="18"/>
    </location>
</feature>
<feature type="modified residue" description="Phosphoserine" evidence="2">
    <location>
        <position position="65"/>
    </location>
</feature>
<feature type="modified residue" description="Phosphothreonine; by MPS1" evidence="2">
    <location>
        <position position="240"/>
    </location>
</feature>
<organism>
    <name type="scientific">Saccharomyces cerevisiae (strain VIN 13)</name>
    <name type="common">Baker's yeast</name>
    <dbReference type="NCBI Taxonomy" id="764099"/>
    <lineage>
        <taxon>Eukaryota</taxon>
        <taxon>Fungi</taxon>
        <taxon>Dikarya</taxon>
        <taxon>Ascomycota</taxon>
        <taxon>Saccharomycotina</taxon>
        <taxon>Saccharomycetes</taxon>
        <taxon>Saccharomycetales</taxon>
        <taxon>Saccharomycetaceae</taxon>
        <taxon>Saccharomyces</taxon>
    </lineage>
</organism>
<sequence>MDYSNFGNSASKKFQDDTLNRVRKEHEEALKKLREENFSSNTSELGNKKHYRAQERMSSPLHRLSPTGKSDDRKVKSPLDDKLRRQLREGNTRLPPPPFSSYGMPPTNRSNLDRIRRRTSSPVRTDKFASQNVIDDQRLEIKYLERIVYDQGTVIDNLTSRITRLESFILNSISDRGDKNFASLEHSRSFSGFPTNKTYGLQMGGLYENDMPYRRSSDNINKEGAREDRSSQIHIENESTEDILKILSSSFHN</sequence>
<reference key="1">
    <citation type="journal article" date="2011" name="PLoS Genet.">
        <title>Whole-genome comparison reveals novel genetic elements that characterize the genome of industrial strains of Saccharomyces cerevisiae.</title>
        <authorList>
            <person name="Borneman A.R."/>
            <person name="Desany B.A."/>
            <person name="Riches D."/>
            <person name="Affourtit J.P."/>
            <person name="Forgan A.H."/>
            <person name="Pretorius I.S."/>
            <person name="Egholm M."/>
            <person name="Chambers P.J."/>
        </authorList>
    </citation>
    <scope>NUCLEOTIDE SEQUENCE [LARGE SCALE GENOMIC DNA]</scope>
    <source>
        <strain>VIN 13</strain>
    </source>
</reference>
<gene>
    <name type="primary">SPC29</name>
    <name type="synonym">LPH3</name>
    <name type="synonym">NIP29</name>
    <name type="ORF">VIN13_4844</name>
</gene>
<dbReference type="EMBL" id="ADXC01000079">
    <property type="protein sequence ID" value="EGA76313.1"/>
    <property type="molecule type" value="Genomic_DNA"/>
</dbReference>
<dbReference type="SMR" id="E7M1C7"/>
<dbReference type="HOGENOM" id="CLU_1099229_0_0_1"/>
<dbReference type="GO" id="GO:0005823">
    <property type="term" value="C:central plaque of spindle pole body"/>
    <property type="evidence" value="ECO:0007669"/>
    <property type="project" value="InterPro"/>
</dbReference>
<dbReference type="GO" id="GO:0005737">
    <property type="term" value="C:cytoplasm"/>
    <property type="evidence" value="ECO:0007669"/>
    <property type="project" value="UniProtKB-KW"/>
</dbReference>
<dbReference type="GO" id="GO:0005634">
    <property type="term" value="C:nucleus"/>
    <property type="evidence" value="ECO:0007669"/>
    <property type="project" value="UniProtKB-SubCell"/>
</dbReference>
<dbReference type="GO" id="GO:0005200">
    <property type="term" value="F:structural constituent of cytoskeleton"/>
    <property type="evidence" value="ECO:0007669"/>
    <property type="project" value="InterPro"/>
</dbReference>
<dbReference type="GO" id="GO:0030474">
    <property type="term" value="P:spindle pole body duplication"/>
    <property type="evidence" value="ECO:0007669"/>
    <property type="project" value="InterPro"/>
</dbReference>
<dbReference type="InterPro" id="IPR031392">
    <property type="entry name" value="Spc29"/>
</dbReference>
<dbReference type="Pfam" id="PF17082">
    <property type="entry name" value="Spc29"/>
    <property type="match status" value="1"/>
</dbReference>
<proteinExistence type="inferred from homology"/>